<accession>A9NEE6</accession>
<sequence>MAKKSKIAKDKKQREIVAIYAEKRRALKEAGDYQGLSSLPKDASPVRLRNRDSLDGRPRAYMRKFGVSRITFRELAHKGEIPGVKKASW</sequence>
<reference key="1">
    <citation type="journal article" date="2011" name="J. Bacteriol.">
        <title>Complete genome and proteome of Acholeplasma laidlawii.</title>
        <authorList>
            <person name="Lazarev V.N."/>
            <person name="Levitskii S.A."/>
            <person name="Basovskii Y.I."/>
            <person name="Chukin M.M."/>
            <person name="Akopian T.A."/>
            <person name="Vereshchagin V.V."/>
            <person name="Kostrjukova E.S."/>
            <person name="Kovaleva G.Y."/>
            <person name="Kazanov M.D."/>
            <person name="Malko D.B."/>
            <person name="Vitreschak A.G."/>
            <person name="Sernova N.V."/>
            <person name="Gelfand M.S."/>
            <person name="Demina I.A."/>
            <person name="Serebryakova M.V."/>
            <person name="Galyamina M.A."/>
            <person name="Vtyurin N.N."/>
            <person name="Rogov S.I."/>
            <person name="Alexeev D.G."/>
            <person name="Ladygina V.G."/>
            <person name="Govorun V.M."/>
        </authorList>
    </citation>
    <scope>NUCLEOTIDE SEQUENCE [LARGE SCALE GENOMIC DNA]</scope>
    <source>
        <strain>PG-8A</strain>
    </source>
</reference>
<comment type="function">
    <text evidence="1">Binds 16S rRNA, required for the assembly of 30S particles and may also be responsible for determining the conformation of the 16S rRNA at the A site.</text>
</comment>
<comment type="subunit">
    <text evidence="1">Part of the 30S ribosomal subunit. Contacts proteins S3 and S10.</text>
</comment>
<comment type="similarity">
    <text evidence="1">Belongs to the universal ribosomal protein uS14 family.</text>
</comment>
<dbReference type="EMBL" id="CP000896">
    <property type="protein sequence ID" value="ABX80726.1"/>
    <property type="molecule type" value="Genomic_DNA"/>
</dbReference>
<dbReference type="RefSeq" id="WP_012242057.1">
    <property type="nucleotide sequence ID" value="NC_010163.1"/>
</dbReference>
<dbReference type="SMR" id="A9NEE6"/>
<dbReference type="STRING" id="441768.ACL_0100"/>
<dbReference type="GeneID" id="41338302"/>
<dbReference type="KEGG" id="acl:ACL_0100"/>
<dbReference type="eggNOG" id="COG0199">
    <property type="taxonomic scope" value="Bacteria"/>
</dbReference>
<dbReference type="HOGENOM" id="CLU_139869_0_0_14"/>
<dbReference type="OrthoDB" id="9810484at2"/>
<dbReference type="Proteomes" id="UP000008558">
    <property type="component" value="Chromosome"/>
</dbReference>
<dbReference type="GO" id="GO:0005737">
    <property type="term" value="C:cytoplasm"/>
    <property type="evidence" value="ECO:0007669"/>
    <property type="project" value="UniProtKB-ARBA"/>
</dbReference>
<dbReference type="GO" id="GO:0015935">
    <property type="term" value="C:small ribosomal subunit"/>
    <property type="evidence" value="ECO:0007669"/>
    <property type="project" value="TreeGrafter"/>
</dbReference>
<dbReference type="GO" id="GO:0019843">
    <property type="term" value="F:rRNA binding"/>
    <property type="evidence" value="ECO:0007669"/>
    <property type="project" value="UniProtKB-UniRule"/>
</dbReference>
<dbReference type="GO" id="GO:0003735">
    <property type="term" value="F:structural constituent of ribosome"/>
    <property type="evidence" value="ECO:0007669"/>
    <property type="project" value="InterPro"/>
</dbReference>
<dbReference type="GO" id="GO:0006412">
    <property type="term" value="P:translation"/>
    <property type="evidence" value="ECO:0007669"/>
    <property type="project" value="UniProtKB-UniRule"/>
</dbReference>
<dbReference type="Gene3D" id="4.10.830.10">
    <property type="entry name" value="30s Ribosomal Protein S14, Chain N"/>
    <property type="match status" value="1"/>
</dbReference>
<dbReference type="HAMAP" id="MF_00537">
    <property type="entry name" value="Ribosomal_uS14_1"/>
    <property type="match status" value="1"/>
</dbReference>
<dbReference type="InterPro" id="IPR001209">
    <property type="entry name" value="Ribosomal_uS14"/>
</dbReference>
<dbReference type="InterPro" id="IPR023036">
    <property type="entry name" value="Ribosomal_uS14_bac/plastid"/>
</dbReference>
<dbReference type="InterPro" id="IPR043140">
    <property type="entry name" value="Ribosomal_uS14_sf"/>
</dbReference>
<dbReference type="NCBIfam" id="NF006477">
    <property type="entry name" value="PRK08881.1"/>
    <property type="match status" value="1"/>
</dbReference>
<dbReference type="PANTHER" id="PTHR19836">
    <property type="entry name" value="30S RIBOSOMAL PROTEIN S14"/>
    <property type="match status" value="1"/>
</dbReference>
<dbReference type="PANTHER" id="PTHR19836:SF19">
    <property type="entry name" value="SMALL RIBOSOMAL SUBUNIT PROTEIN US14M"/>
    <property type="match status" value="1"/>
</dbReference>
<dbReference type="Pfam" id="PF00253">
    <property type="entry name" value="Ribosomal_S14"/>
    <property type="match status" value="1"/>
</dbReference>
<dbReference type="SUPFAM" id="SSF57716">
    <property type="entry name" value="Glucocorticoid receptor-like (DNA-binding domain)"/>
    <property type="match status" value="1"/>
</dbReference>
<feature type="chain" id="PRO_1000128272" description="Small ribosomal subunit protein uS14">
    <location>
        <begin position="1"/>
        <end position="89"/>
    </location>
</feature>
<gene>
    <name evidence="1" type="primary">rpsN</name>
    <name type="ordered locus">ACL_0100</name>
</gene>
<keyword id="KW-1185">Reference proteome</keyword>
<keyword id="KW-0687">Ribonucleoprotein</keyword>
<keyword id="KW-0689">Ribosomal protein</keyword>
<keyword id="KW-0694">RNA-binding</keyword>
<keyword id="KW-0699">rRNA-binding</keyword>
<evidence type="ECO:0000255" key="1">
    <source>
        <dbReference type="HAMAP-Rule" id="MF_00537"/>
    </source>
</evidence>
<evidence type="ECO:0000305" key="2"/>
<protein>
    <recommendedName>
        <fullName evidence="1">Small ribosomal subunit protein uS14</fullName>
    </recommendedName>
    <alternativeName>
        <fullName evidence="2">30S ribosomal protein S14</fullName>
    </alternativeName>
</protein>
<proteinExistence type="inferred from homology"/>
<name>RS14_ACHLI</name>
<organism>
    <name type="scientific">Acholeplasma laidlawii (strain PG-8A)</name>
    <dbReference type="NCBI Taxonomy" id="441768"/>
    <lineage>
        <taxon>Bacteria</taxon>
        <taxon>Bacillati</taxon>
        <taxon>Mycoplasmatota</taxon>
        <taxon>Mollicutes</taxon>
        <taxon>Acholeplasmatales</taxon>
        <taxon>Acholeplasmataceae</taxon>
        <taxon>Acholeplasma</taxon>
    </lineage>
</organism>